<name>MINC_DEIRA</name>
<reference key="1">
    <citation type="journal article" date="1999" name="Science">
        <title>Genome sequence of the radioresistant bacterium Deinococcus radiodurans R1.</title>
        <authorList>
            <person name="White O."/>
            <person name="Eisen J.A."/>
            <person name="Heidelberg J.F."/>
            <person name="Hickey E.K."/>
            <person name="Peterson J.D."/>
            <person name="Dodson R.J."/>
            <person name="Haft D.H."/>
            <person name="Gwinn M.L."/>
            <person name="Nelson W.C."/>
            <person name="Richardson D.L."/>
            <person name="Moffat K.S."/>
            <person name="Qin H."/>
            <person name="Jiang L."/>
            <person name="Pamphile W."/>
            <person name="Crosby M."/>
            <person name="Shen M."/>
            <person name="Vamathevan J.J."/>
            <person name="Lam P."/>
            <person name="McDonald L.A."/>
            <person name="Utterback T.R."/>
            <person name="Zalewski C."/>
            <person name="Makarova K.S."/>
            <person name="Aravind L."/>
            <person name="Daly M.J."/>
            <person name="Minton K.W."/>
            <person name="Fleischmann R.D."/>
            <person name="Ketchum K.A."/>
            <person name="Nelson K.E."/>
            <person name="Salzberg S.L."/>
            <person name="Smith H.O."/>
            <person name="Venter J.C."/>
            <person name="Fraser C.M."/>
        </authorList>
    </citation>
    <scope>NUCLEOTIDE SEQUENCE [LARGE SCALE GENOMIC DNA]</scope>
    <source>
        <strain>ATCC 13939 / DSM 20539 / JCM 16871 / CCUG 27074 / LMG 4051 / NBRC 15346 / NCIMB 9279 / VKM B-1422 / R1</strain>
    </source>
</reference>
<organism>
    <name type="scientific">Deinococcus radiodurans (strain ATCC 13939 / DSM 20539 / JCM 16871 / CCUG 27074 / LMG 4051 / NBRC 15346 / NCIMB 9279 / VKM B-1422 / R1)</name>
    <dbReference type="NCBI Taxonomy" id="243230"/>
    <lineage>
        <taxon>Bacteria</taxon>
        <taxon>Thermotogati</taxon>
        <taxon>Deinococcota</taxon>
        <taxon>Deinococci</taxon>
        <taxon>Deinococcales</taxon>
        <taxon>Deinococcaceae</taxon>
        <taxon>Deinococcus</taxon>
    </lineage>
</organism>
<protein>
    <recommendedName>
        <fullName>Probable septum site-determining protein MinC</fullName>
    </recommendedName>
</protein>
<sequence length="169" mass="17648">MLTAQITVEIQGDTHPEAVEAALQGVREAGGTLGRVRAPRLTVNMPASVAAEPVTSAQTVIVPHSVRAGFRGEYRGSVVVLGDVNPGAELIAAGDVIVAGALRGVVHAGYGGTHPDPIVWARPIASAQIRIGDAVARAPEGSSNMRRTDRTERAERAYLQDGMIVIDVQ</sequence>
<comment type="function">
    <text evidence="1">Cell division inhibitor that blocks the formation of polar Z ring septums. Rapidly oscillates between the poles of the cell to destabilize FtsZ filaments that have formed before they mature into polar Z rings. Prevents FtsZ polymerization (By similarity).</text>
</comment>
<comment type="subunit">
    <text evidence="1">Interacts with MinD and FtsZ.</text>
</comment>
<comment type="similarity">
    <text evidence="2">Belongs to the MinC family.</text>
</comment>
<accession>Q9RTK7</accession>
<proteinExistence type="inferred from homology"/>
<evidence type="ECO:0000250" key="1"/>
<evidence type="ECO:0000305" key="2"/>
<feature type="chain" id="PRO_0000189032" description="Probable septum site-determining protein MinC">
    <location>
        <begin position="1"/>
        <end position="169"/>
    </location>
</feature>
<keyword id="KW-0131">Cell cycle</keyword>
<keyword id="KW-0132">Cell division</keyword>
<keyword id="KW-1185">Reference proteome</keyword>
<keyword id="KW-0717">Septation</keyword>
<dbReference type="EMBL" id="AE000513">
    <property type="protein sequence ID" value="AAF11310.1"/>
    <property type="molecule type" value="Genomic_DNA"/>
</dbReference>
<dbReference type="PIR" id="B75357">
    <property type="entry name" value="B75357"/>
</dbReference>
<dbReference type="RefSeq" id="NP_295476.1">
    <property type="nucleotide sequence ID" value="NC_001263.1"/>
</dbReference>
<dbReference type="SMR" id="Q9RTK7"/>
<dbReference type="STRING" id="243230.DR_1753"/>
<dbReference type="PaxDb" id="243230-DR_1753"/>
<dbReference type="EnsemblBacteria" id="AAF11310">
    <property type="protein sequence ID" value="AAF11310"/>
    <property type="gene ID" value="DR_1753"/>
</dbReference>
<dbReference type="KEGG" id="dra:DR_1753"/>
<dbReference type="PATRIC" id="fig|243230.17.peg.1963"/>
<dbReference type="eggNOG" id="COG0850">
    <property type="taxonomic scope" value="Bacteria"/>
</dbReference>
<dbReference type="HOGENOM" id="CLU_048711_2_0_0"/>
<dbReference type="InParanoid" id="Q9RTK7"/>
<dbReference type="OrthoDB" id="9790810at2"/>
<dbReference type="Proteomes" id="UP000002524">
    <property type="component" value="Chromosome 1"/>
</dbReference>
<dbReference type="GO" id="GO:0000902">
    <property type="term" value="P:cell morphogenesis"/>
    <property type="evidence" value="ECO:0007669"/>
    <property type="project" value="InterPro"/>
</dbReference>
<dbReference type="GO" id="GO:0000917">
    <property type="term" value="P:division septum assembly"/>
    <property type="evidence" value="ECO:0007669"/>
    <property type="project" value="UniProtKB-KW"/>
</dbReference>
<dbReference type="GO" id="GO:1901891">
    <property type="term" value="P:regulation of cell septum assembly"/>
    <property type="evidence" value="ECO:0007669"/>
    <property type="project" value="InterPro"/>
</dbReference>
<dbReference type="Gene3D" id="2.160.20.70">
    <property type="match status" value="1"/>
</dbReference>
<dbReference type="InterPro" id="IPR016098">
    <property type="entry name" value="CAP/MinC_C"/>
</dbReference>
<dbReference type="InterPro" id="IPR013033">
    <property type="entry name" value="MinC"/>
</dbReference>
<dbReference type="InterPro" id="IPR036145">
    <property type="entry name" value="MinC_C_sf"/>
</dbReference>
<dbReference type="InterPro" id="IPR005526">
    <property type="entry name" value="Septum_form_inhib_MinC_C"/>
</dbReference>
<dbReference type="PANTHER" id="PTHR34108">
    <property type="entry name" value="SEPTUM SITE-DETERMINING PROTEIN MINC"/>
    <property type="match status" value="1"/>
</dbReference>
<dbReference type="PANTHER" id="PTHR34108:SF1">
    <property type="entry name" value="SEPTUM SITE-DETERMINING PROTEIN MINC"/>
    <property type="match status" value="1"/>
</dbReference>
<dbReference type="Pfam" id="PF03775">
    <property type="entry name" value="MinC_C"/>
    <property type="match status" value="1"/>
</dbReference>
<dbReference type="SUPFAM" id="SSF63848">
    <property type="entry name" value="Cell-division inhibitor MinC, C-terminal domain"/>
    <property type="match status" value="1"/>
</dbReference>
<gene>
    <name type="primary">minC</name>
    <name type="ordered locus">DR_1753</name>
</gene>